<organism>
    <name type="scientific">Thermotoga sp. (strain RQ2)</name>
    <dbReference type="NCBI Taxonomy" id="126740"/>
    <lineage>
        <taxon>Bacteria</taxon>
        <taxon>Thermotogati</taxon>
        <taxon>Thermotogota</taxon>
        <taxon>Thermotogae</taxon>
        <taxon>Thermotogales</taxon>
        <taxon>Thermotogaceae</taxon>
        <taxon>Thermotoga</taxon>
    </lineage>
</organism>
<protein>
    <recommendedName>
        <fullName evidence="1">Quinolinate synthase</fullName>
        <ecNumber evidence="1">2.5.1.72</ecNumber>
    </recommendedName>
</protein>
<evidence type="ECO:0000255" key="1">
    <source>
        <dbReference type="HAMAP-Rule" id="MF_00568"/>
    </source>
</evidence>
<gene>
    <name evidence="1" type="primary">nadA</name>
    <name type="ordered locus">TRQ2_1185</name>
</gene>
<sequence length="298" mass="33580">MVDEILKLKKEKGYIILAHNYQIPELQDIADFVGDSLQLARKAMELSEKKILFLGVDFMAELVKILNPDKKVIVPDRSATCPMANHLTPEIIREYREKFPDVPVVLYVNSTSECKALADVICTSANAVEVVKKLDSSVVIFGPDRNLGEYVAEKTGKKVITIPENGHCPVHQFNAESIDAVRKKYPDAKVIVHPESPKPVRDKADYVGSTGQMEKIPEKDPSRIFVIGTEIGMIHKLKKKFPDREFVPLEMAVCVNMKKNTLENTLHALQTESFEVILPKEVIEKAKKPILRMFELMG</sequence>
<accession>B1LB31</accession>
<name>NADA_THESQ</name>
<feature type="chain" id="PRO_1000129447" description="Quinolinate synthase">
    <location>
        <begin position="1"/>
        <end position="298"/>
    </location>
</feature>
<feature type="binding site" evidence="1">
    <location>
        <position position="19"/>
    </location>
    <ligand>
        <name>iminosuccinate</name>
        <dbReference type="ChEBI" id="CHEBI:77875"/>
    </ligand>
</feature>
<feature type="binding site" evidence="1">
    <location>
        <position position="36"/>
    </location>
    <ligand>
        <name>iminosuccinate</name>
        <dbReference type="ChEBI" id="CHEBI:77875"/>
    </ligand>
</feature>
<feature type="binding site" evidence="1">
    <location>
        <position position="81"/>
    </location>
    <ligand>
        <name>[4Fe-4S] cluster</name>
        <dbReference type="ChEBI" id="CHEBI:49883"/>
    </ligand>
</feature>
<feature type="binding site" evidence="1">
    <location>
        <begin position="107"/>
        <end position="109"/>
    </location>
    <ligand>
        <name>iminosuccinate</name>
        <dbReference type="ChEBI" id="CHEBI:77875"/>
    </ligand>
</feature>
<feature type="binding site" evidence="1">
    <location>
        <position position="124"/>
    </location>
    <ligand>
        <name>iminosuccinate</name>
        <dbReference type="ChEBI" id="CHEBI:77875"/>
    </ligand>
</feature>
<feature type="binding site" evidence="1">
    <location>
        <position position="168"/>
    </location>
    <ligand>
        <name>[4Fe-4S] cluster</name>
        <dbReference type="ChEBI" id="CHEBI:49883"/>
    </ligand>
</feature>
<feature type="binding site" evidence="1">
    <location>
        <begin position="193"/>
        <end position="195"/>
    </location>
    <ligand>
        <name>iminosuccinate</name>
        <dbReference type="ChEBI" id="CHEBI:77875"/>
    </ligand>
</feature>
<feature type="binding site" evidence="1">
    <location>
        <position position="210"/>
    </location>
    <ligand>
        <name>iminosuccinate</name>
        <dbReference type="ChEBI" id="CHEBI:77875"/>
    </ligand>
</feature>
<feature type="binding site" evidence="1">
    <location>
        <position position="254"/>
    </location>
    <ligand>
        <name>[4Fe-4S] cluster</name>
        <dbReference type="ChEBI" id="CHEBI:49883"/>
    </ligand>
</feature>
<keyword id="KW-0004">4Fe-4S</keyword>
<keyword id="KW-0963">Cytoplasm</keyword>
<keyword id="KW-0408">Iron</keyword>
<keyword id="KW-0411">Iron-sulfur</keyword>
<keyword id="KW-0479">Metal-binding</keyword>
<keyword id="KW-0662">Pyridine nucleotide biosynthesis</keyword>
<keyword id="KW-0808">Transferase</keyword>
<proteinExistence type="inferred from homology"/>
<reference key="1">
    <citation type="journal article" date="2011" name="J. Bacteriol.">
        <title>Genome sequence of Thermotoga sp. strain RQ2, a hyperthermophilic bacterium isolated from a geothermally heated region of the seafloor near Ribeira Quente, the Azores.</title>
        <authorList>
            <person name="Swithers K.S."/>
            <person name="DiPippo J.L."/>
            <person name="Bruce D.C."/>
            <person name="Detter C."/>
            <person name="Tapia R."/>
            <person name="Han S."/>
            <person name="Saunders E."/>
            <person name="Goodwin L.A."/>
            <person name="Han J."/>
            <person name="Woyke T."/>
            <person name="Pitluck S."/>
            <person name="Pennacchio L."/>
            <person name="Nolan M."/>
            <person name="Mikhailova N."/>
            <person name="Lykidis A."/>
            <person name="Land M.L."/>
            <person name="Brettin T."/>
            <person name="Stetter K.O."/>
            <person name="Nelson K.E."/>
            <person name="Gogarten J.P."/>
            <person name="Noll K.M."/>
        </authorList>
    </citation>
    <scope>NUCLEOTIDE SEQUENCE [LARGE SCALE GENOMIC DNA]</scope>
    <source>
        <strain>RQ2</strain>
    </source>
</reference>
<comment type="function">
    <text evidence="1">Catalyzes the condensation of iminoaspartate with dihydroxyacetone phosphate to form quinolinate.</text>
</comment>
<comment type="catalytic activity">
    <reaction evidence="1">
        <text>iminosuccinate + dihydroxyacetone phosphate = quinolinate + phosphate + 2 H2O + H(+)</text>
        <dbReference type="Rhea" id="RHEA:25888"/>
        <dbReference type="ChEBI" id="CHEBI:15377"/>
        <dbReference type="ChEBI" id="CHEBI:15378"/>
        <dbReference type="ChEBI" id="CHEBI:29959"/>
        <dbReference type="ChEBI" id="CHEBI:43474"/>
        <dbReference type="ChEBI" id="CHEBI:57642"/>
        <dbReference type="ChEBI" id="CHEBI:77875"/>
        <dbReference type="EC" id="2.5.1.72"/>
    </reaction>
    <physiologicalReaction direction="left-to-right" evidence="1">
        <dbReference type="Rhea" id="RHEA:25889"/>
    </physiologicalReaction>
</comment>
<comment type="cofactor">
    <cofactor evidence="1">
        <name>[4Fe-4S] cluster</name>
        <dbReference type="ChEBI" id="CHEBI:49883"/>
    </cofactor>
    <text evidence="1">Binds 1 [4Fe-4S] cluster per subunit.</text>
</comment>
<comment type="pathway">
    <text evidence="1">Cofactor biosynthesis; NAD(+) biosynthesis; quinolinate from iminoaspartate: step 1/1.</text>
</comment>
<comment type="subcellular location">
    <subcellularLocation>
        <location evidence="1">Cytoplasm</location>
    </subcellularLocation>
</comment>
<comment type="similarity">
    <text evidence="1">Belongs to the quinolinate synthase family. Type 2 subfamily.</text>
</comment>
<dbReference type="EC" id="2.5.1.72" evidence="1"/>
<dbReference type="EMBL" id="CP000969">
    <property type="protein sequence ID" value="ACB09529.1"/>
    <property type="molecule type" value="Genomic_DNA"/>
</dbReference>
<dbReference type="RefSeq" id="WP_012311000.1">
    <property type="nucleotide sequence ID" value="NC_010483.1"/>
</dbReference>
<dbReference type="SMR" id="B1LB31"/>
<dbReference type="KEGG" id="trq:TRQ2_1185"/>
<dbReference type="HOGENOM" id="CLU_047382_0_0_0"/>
<dbReference type="UniPathway" id="UPA00253">
    <property type="reaction ID" value="UER00327"/>
</dbReference>
<dbReference type="Proteomes" id="UP000001687">
    <property type="component" value="Chromosome"/>
</dbReference>
<dbReference type="GO" id="GO:0005829">
    <property type="term" value="C:cytosol"/>
    <property type="evidence" value="ECO:0007669"/>
    <property type="project" value="TreeGrafter"/>
</dbReference>
<dbReference type="GO" id="GO:0051539">
    <property type="term" value="F:4 iron, 4 sulfur cluster binding"/>
    <property type="evidence" value="ECO:0007669"/>
    <property type="project" value="UniProtKB-KW"/>
</dbReference>
<dbReference type="GO" id="GO:0046872">
    <property type="term" value="F:metal ion binding"/>
    <property type="evidence" value="ECO:0007669"/>
    <property type="project" value="UniProtKB-KW"/>
</dbReference>
<dbReference type="GO" id="GO:0008987">
    <property type="term" value="F:quinolinate synthetase A activity"/>
    <property type="evidence" value="ECO:0007669"/>
    <property type="project" value="UniProtKB-UniRule"/>
</dbReference>
<dbReference type="GO" id="GO:0034628">
    <property type="term" value="P:'de novo' NAD biosynthetic process from L-aspartate"/>
    <property type="evidence" value="ECO:0007669"/>
    <property type="project" value="TreeGrafter"/>
</dbReference>
<dbReference type="FunFam" id="3.40.50.10800:FF:000001">
    <property type="entry name" value="Quinolinate synthase A"/>
    <property type="match status" value="1"/>
</dbReference>
<dbReference type="FunFam" id="3.40.50.10800:FF:000003">
    <property type="entry name" value="Quinolinate synthase A"/>
    <property type="match status" value="1"/>
</dbReference>
<dbReference type="Gene3D" id="3.40.50.10800">
    <property type="entry name" value="NadA-like"/>
    <property type="match status" value="3"/>
</dbReference>
<dbReference type="HAMAP" id="MF_00568">
    <property type="entry name" value="NadA_type2"/>
    <property type="match status" value="1"/>
</dbReference>
<dbReference type="InterPro" id="IPR003473">
    <property type="entry name" value="NadA"/>
</dbReference>
<dbReference type="InterPro" id="IPR036094">
    <property type="entry name" value="NadA_sf"/>
</dbReference>
<dbReference type="InterPro" id="IPR023066">
    <property type="entry name" value="Quinolinate_synth_type2"/>
</dbReference>
<dbReference type="NCBIfam" id="TIGR00550">
    <property type="entry name" value="nadA"/>
    <property type="match status" value="1"/>
</dbReference>
<dbReference type="NCBIfam" id="NF006878">
    <property type="entry name" value="PRK09375.1-2"/>
    <property type="match status" value="1"/>
</dbReference>
<dbReference type="PANTHER" id="PTHR30573:SF0">
    <property type="entry name" value="QUINOLINATE SYNTHASE, CHLOROPLASTIC"/>
    <property type="match status" value="1"/>
</dbReference>
<dbReference type="PANTHER" id="PTHR30573">
    <property type="entry name" value="QUINOLINATE SYNTHETASE A"/>
    <property type="match status" value="1"/>
</dbReference>
<dbReference type="Pfam" id="PF02445">
    <property type="entry name" value="NadA"/>
    <property type="match status" value="1"/>
</dbReference>
<dbReference type="SUPFAM" id="SSF142754">
    <property type="entry name" value="NadA-like"/>
    <property type="match status" value="1"/>
</dbReference>